<comment type="subcellular location">
    <subcellularLocation>
        <location evidence="1">Secreted</location>
    </subcellularLocation>
</comment>
<comment type="tissue specificity">
    <text>Expressed by the venom gland.</text>
</comment>
<comment type="domain">
    <text evidence="1">The presence of a 'disulfide through disulfide knot' structurally defines this protein as a knottin.</text>
</comment>
<comment type="similarity">
    <text evidence="3">Belongs to the neurotoxin 19 (CSTX) family. 01 subfamily.</text>
</comment>
<keyword id="KW-1015">Disulfide bond</keyword>
<keyword id="KW-0960">Knottin</keyword>
<keyword id="KW-0964">Secreted</keyword>
<keyword id="KW-0732">Signal</keyword>
<keyword id="KW-0800">Toxin</keyword>
<proteinExistence type="evidence at transcript level"/>
<feature type="signal peptide" evidence="2">
    <location>
        <begin position="1"/>
        <end position="20"/>
    </location>
</feature>
<feature type="propeptide" id="PRO_0000401663" evidence="1">
    <location>
        <begin position="21"/>
        <end position="44"/>
    </location>
</feature>
<feature type="chain" id="PRO_0000401664" description="U3-lycotoxin-Ls1n">
    <location>
        <begin position="45"/>
        <end position="115"/>
    </location>
</feature>
<feature type="disulfide bond" evidence="1">
    <location>
        <begin position="48"/>
        <end position="63"/>
    </location>
</feature>
<feature type="disulfide bond" evidence="1">
    <location>
        <begin position="55"/>
        <end position="72"/>
    </location>
</feature>
<feature type="disulfide bond" evidence="1">
    <location>
        <begin position="62"/>
        <end position="87"/>
    </location>
</feature>
<feature type="disulfide bond" evidence="1">
    <location>
        <begin position="74"/>
        <end position="85"/>
    </location>
</feature>
<organism>
    <name type="scientific">Lycosa singoriensis</name>
    <name type="common">Wolf spider</name>
    <name type="synonym">Aranea singoriensis</name>
    <dbReference type="NCBI Taxonomy" id="434756"/>
    <lineage>
        <taxon>Eukaryota</taxon>
        <taxon>Metazoa</taxon>
        <taxon>Ecdysozoa</taxon>
        <taxon>Arthropoda</taxon>
        <taxon>Chelicerata</taxon>
        <taxon>Arachnida</taxon>
        <taxon>Araneae</taxon>
        <taxon>Araneomorphae</taxon>
        <taxon>Entelegynae</taxon>
        <taxon>Lycosoidea</taxon>
        <taxon>Lycosidae</taxon>
        <taxon>Lycosa</taxon>
    </lineage>
</organism>
<accession>B6DCS5</accession>
<sequence length="115" mass="13227">MKFVLLFGVLLVTLFSYSSAEMLDDFDQADEDELLSLIEKEEARAKECTPRFYDCSHDRHSCCRSELFKDVCTCFYPEGGDNEVCTCQQPKHLKYMEKAAGEAKKFGGKIKKWFG</sequence>
<name>TX330_LYCSI</name>
<evidence type="ECO:0000250" key="1"/>
<evidence type="ECO:0000255" key="2"/>
<evidence type="ECO:0000305" key="3"/>
<protein>
    <recommendedName>
        <fullName>U3-lycotoxin-Ls1n</fullName>
    </recommendedName>
    <alternativeName>
        <fullName>Toxin-like structure LSTX-B30</fullName>
    </alternativeName>
</protein>
<dbReference type="EMBL" id="EU926009">
    <property type="protein sequence ID" value="ACI41341.1"/>
    <property type="molecule type" value="mRNA"/>
</dbReference>
<dbReference type="EMBL" id="FM864013">
    <property type="protein sequence ID" value="CAS03611.1"/>
    <property type="molecule type" value="mRNA"/>
</dbReference>
<dbReference type="SMR" id="B6DCS5"/>
<dbReference type="ArachnoServer" id="AS000958">
    <property type="toxin name" value="U3-lycotoxin-Ls1n"/>
</dbReference>
<dbReference type="GO" id="GO:0005576">
    <property type="term" value="C:extracellular region"/>
    <property type="evidence" value="ECO:0007669"/>
    <property type="project" value="UniProtKB-SubCell"/>
</dbReference>
<dbReference type="GO" id="GO:0090729">
    <property type="term" value="F:toxin activity"/>
    <property type="evidence" value="ECO:0007669"/>
    <property type="project" value="UniProtKB-KW"/>
</dbReference>
<dbReference type="InterPro" id="IPR019553">
    <property type="entry name" value="Spider_toxin_CSTX_knottin"/>
</dbReference>
<dbReference type="InterPro" id="IPR011142">
    <property type="entry name" value="Spider_toxin_CSTX_Knottin_CS"/>
</dbReference>
<dbReference type="Pfam" id="PF10530">
    <property type="entry name" value="Toxin_35"/>
    <property type="match status" value="1"/>
</dbReference>
<dbReference type="PROSITE" id="PS60029">
    <property type="entry name" value="SPIDER_CSTX"/>
    <property type="match status" value="1"/>
</dbReference>
<reference key="1">
    <citation type="journal article" date="2010" name="Zoology">
        <title>Transcriptome analysis of the venom glands of the Chinese wolf spider Lycosa singoriensis.</title>
        <authorList>
            <person name="Zhang Y."/>
            <person name="Chen J."/>
            <person name="Tang X."/>
            <person name="Wang F."/>
            <person name="Jiang L."/>
            <person name="Xiong X."/>
            <person name="Wang M."/>
            <person name="Rong M."/>
            <person name="Liu Z."/>
            <person name="Liang S."/>
        </authorList>
    </citation>
    <scope>NUCLEOTIDE SEQUENCE [LARGE SCALE MRNA]</scope>
    <source>
        <tissue>Venom gland</tissue>
    </source>
</reference>